<evidence type="ECO:0000255" key="1">
    <source>
        <dbReference type="HAMAP-Rule" id="MF_00156"/>
    </source>
</evidence>
<name>PANB_STACT</name>
<comment type="function">
    <text evidence="1">Catalyzes the reversible reaction in which hydroxymethyl group from 5,10-methylenetetrahydrofolate is transferred onto alpha-ketoisovalerate to form ketopantoate.</text>
</comment>
<comment type="catalytic activity">
    <reaction evidence="1">
        <text>3-methyl-2-oxobutanoate + (6R)-5,10-methylene-5,6,7,8-tetrahydrofolate + H2O = 2-dehydropantoate + (6S)-5,6,7,8-tetrahydrofolate</text>
        <dbReference type="Rhea" id="RHEA:11824"/>
        <dbReference type="ChEBI" id="CHEBI:11561"/>
        <dbReference type="ChEBI" id="CHEBI:11851"/>
        <dbReference type="ChEBI" id="CHEBI:15377"/>
        <dbReference type="ChEBI" id="CHEBI:15636"/>
        <dbReference type="ChEBI" id="CHEBI:57453"/>
        <dbReference type="EC" id="2.1.2.11"/>
    </reaction>
</comment>
<comment type="cofactor">
    <cofactor evidence="1">
        <name>Mg(2+)</name>
        <dbReference type="ChEBI" id="CHEBI:18420"/>
    </cofactor>
    <text evidence="1">Binds 1 Mg(2+) ion per subunit.</text>
</comment>
<comment type="pathway">
    <text evidence="1">Cofactor biosynthesis; (R)-pantothenate biosynthesis; (R)-pantoate from 3-methyl-2-oxobutanoate: step 1/2.</text>
</comment>
<comment type="subunit">
    <text evidence="1">Homodecamer; pentamer of dimers.</text>
</comment>
<comment type="subcellular location">
    <subcellularLocation>
        <location evidence="1">Cytoplasm</location>
    </subcellularLocation>
</comment>
<comment type="similarity">
    <text evidence="1">Belongs to the PanB family.</text>
</comment>
<dbReference type="EC" id="2.1.2.11" evidence="1"/>
<dbReference type="EMBL" id="AM295250">
    <property type="protein sequence ID" value="CAL28977.1"/>
    <property type="molecule type" value="Genomic_DNA"/>
</dbReference>
<dbReference type="RefSeq" id="WP_015901313.1">
    <property type="nucleotide sequence ID" value="NC_012121.1"/>
</dbReference>
<dbReference type="SMR" id="B9DKF4"/>
<dbReference type="GeneID" id="93794521"/>
<dbReference type="KEGG" id="sca:SCA_2072"/>
<dbReference type="eggNOG" id="COG0413">
    <property type="taxonomic scope" value="Bacteria"/>
</dbReference>
<dbReference type="HOGENOM" id="CLU_036645_1_0_9"/>
<dbReference type="OrthoDB" id="9781789at2"/>
<dbReference type="BioCyc" id="SCAR396513:SCA_RS10460-MONOMER"/>
<dbReference type="UniPathway" id="UPA00028">
    <property type="reaction ID" value="UER00003"/>
</dbReference>
<dbReference type="Proteomes" id="UP000000444">
    <property type="component" value="Chromosome"/>
</dbReference>
<dbReference type="GO" id="GO:0005737">
    <property type="term" value="C:cytoplasm"/>
    <property type="evidence" value="ECO:0007669"/>
    <property type="project" value="UniProtKB-SubCell"/>
</dbReference>
<dbReference type="GO" id="GO:0003864">
    <property type="term" value="F:3-methyl-2-oxobutanoate hydroxymethyltransferase activity"/>
    <property type="evidence" value="ECO:0007669"/>
    <property type="project" value="UniProtKB-UniRule"/>
</dbReference>
<dbReference type="GO" id="GO:0000287">
    <property type="term" value="F:magnesium ion binding"/>
    <property type="evidence" value="ECO:0007669"/>
    <property type="project" value="TreeGrafter"/>
</dbReference>
<dbReference type="GO" id="GO:0015940">
    <property type="term" value="P:pantothenate biosynthetic process"/>
    <property type="evidence" value="ECO:0007669"/>
    <property type="project" value="UniProtKB-UniRule"/>
</dbReference>
<dbReference type="CDD" id="cd06557">
    <property type="entry name" value="KPHMT-like"/>
    <property type="match status" value="1"/>
</dbReference>
<dbReference type="FunFam" id="3.20.20.60:FF:000003">
    <property type="entry name" value="3-methyl-2-oxobutanoate hydroxymethyltransferase"/>
    <property type="match status" value="1"/>
</dbReference>
<dbReference type="Gene3D" id="3.20.20.60">
    <property type="entry name" value="Phosphoenolpyruvate-binding domains"/>
    <property type="match status" value="1"/>
</dbReference>
<dbReference type="HAMAP" id="MF_00156">
    <property type="entry name" value="PanB"/>
    <property type="match status" value="1"/>
</dbReference>
<dbReference type="InterPro" id="IPR003700">
    <property type="entry name" value="Pantoate_hydroxy_MeTrfase"/>
</dbReference>
<dbReference type="InterPro" id="IPR015813">
    <property type="entry name" value="Pyrv/PenolPyrv_kinase-like_dom"/>
</dbReference>
<dbReference type="InterPro" id="IPR040442">
    <property type="entry name" value="Pyrv_kinase-like_dom_sf"/>
</dbReference>
<dbReference type="NCBIfam" id="TIGR00222">
    <property type="entry name" value="panB"/>
    <property type="match status" value="1"/>
</dbReference>
<dbReference type="NCBIfam" id="NF001452">
    <property type="entry name" value="PRK00311.1"/>
    <property type="match status" value="1"/>
</dbReference>
<dbReference type="PANTHER" id="PTHR20881">
    <property type="entry name" value="3-METHYL-2-OXOBUTANOATE HYDROXYMETHYLTRANSFERASE"/>
    <property type="match status" value="1"/>
</dbReference>
<dbReference type="PANTHER" id="PTHR20881:SF0">
    <property type="entry name" value="3-METHYL-2-OXOBUTANOATE HYDROXYMETHYLTRANSFERASE"/>
    <property type="match status" value="1"/>
</dbReference>
<dbReference type="Pfam" id="PF02548">
    <property type="entry name" value="Pantoate_transf"/>
    <property type="match status" value="1"/>
</dbReference>
<dbReference type="PIRSF" id="PIRSF000388">
    <property type="entry name" value="Pantoate_hydroxy_MeTrfase"/>
    <property type="match status" value="1"/>
</dbReference>
<dbReference type="SUPFAM" id="SSF51621">
    <property type="entry name" value="Phosphoenolpyruvate/pyruvate domain"/>
    <property type="match status" value="1"/>
</dbReference>
<reference key="1">
    <citation type="journal article" date="2009" name="Appl. Environ. Microbiol.">
        <title>Genome analysis of the meat starter culture bacterium Staphylococcus carnosus TM300.</title>
        <authorList>
            <person name="Rosenstein R."/>
            <person name="Nerz C."/>
            <person name="Biswas L."/>
            <person name="Resch A."/>
            <person name="Raddatz G."/>
            <person name="Schuster S.C."/>
            <person name="Goetz F."/>
        </authorList>
    </citation>
    <scope>NUCLEOTIDE SEQUENCE [LARGE SCALE GENOMIC DNA]</scope>
    <source>
        <strain>TM300</strain>
    </source>
</reference>
<accession>B9DKF4</accession>
<gene>
    <name evidence="1" type="primary">panB</name>
    <name type="ordered locus">Sca_2072</name>
</gene>
<protein>
    <recommendedName>
        <fullName evidence="1">3-methyl-2-oxobutanoate hydroxymethyltransferase</fullName>
        <ecNumber evidence="1">2.1.2.11</ecNumber>
    </recommendedName>
    <alternativeName>
        <fullName evidence="1">Ketopantoate hydroxymethyltransferase</fullName>
        <shortName evidence="1">KPHMT</shortName>
    </alternativeName>
</protein>
<keyword id="KW-0963">Cytoplasm</keyword>
<keyword id="KW-0460">Magnesium</keyword>
<keyword id="KW-0479">Metal-binding</keyword>
<keyword id="KW-0566">Pantothenate biosynthesis</keyword>
<keyword id="KW-1185">Reference proteome</keyword>
<keyword id="KW-0808">Transferase</keyword>
<organism>
    <name type="scientific">Staphylococcus carnosus (strain TM300)</name>
    <dbReference type="NCBI Taxonomy" id="396513"/>
    <lineage>
        <taxon>Bacteria</taxon>
        <taxon>Bacillati</taxon>
        <taxon>Bacillota</taxon>
        <taxon>Bacilli</taxon>
        <taxon>Bacillales</taxon>
        <taxon>Staphylococcaceae</taxon>
        <taxon>Staphylococcus</taxon>
    </lineage>
</organism>
<sequence>MKQLSNLFDMKKNSEKITMVTSYDYPSAKQAEAAEIDTILVGDSLGMTVLGYDSTVQVTLNDMIHHGKAVRRGAPNTFVVVDLPIGTVGISDEKDLENALRLYQETKANAVKAEGAHLISFITKASAMGIPVVSHLGLTPQSVGIMGYKMQGSTKEAAKQLISDAEAVQEAGAVMLVLEAVPSDLAALISERLDIPVIGIGAGKGTDGQVLVYHDMLNYGQEHRAKFVKQYGDFSNGIEALQQYHKEVREGDFPSEAYTYKKQILEELDK</sequence>
<proteinExistence type="inferred from homology"/>
<feature type="chain" id="PRO_1000123390" description="3-methyl-2-oxobutanoate hydroxymethyltransferase">
    <location>
        <begin position="1"/>
        <end position="270"/>
    </location>
</feature>
<feature type="active site" description="Proton acceptor" evidence="1">
    <location>
        <position position="179"/>
    </location>
</feature>
<feature type="binding site" evidence="1">
    <location>
        <begin position="43"/>
        <end position="44"/>
    </location>
    <ligand>
        <name>3-methyl-2-oxobutanoate</name>
        <dbReference type="ChEBI" id="CHEBI:11851"/>
    </ligand>
</feature>
<feature type="binding site" evidence="1">
    <location>
        <position position="43"/>
    </location>
    <ligand>
        <name>Mg(2+)</name>
        <dbReference type="ChEBI" id="CHEBI:18420"/>
    </ligand>
</feature>
<feature type="binding site" evidence="1">
    <location>
        <position position="82"/>
    </location>
    <ligand>
        <name>3-methyl-2-oxobutanoate</name>
        <dbReference type="ChEBI" id="CHEBI:11851"/>
    </ligand>
</feature>
<feature type="binding site" evidence="1">
    <location>
        <position position="82"/>
    </location>
    <ligand>
        <name>Mg(2+)</name>
        <dbReference type="ChEBI" id="CHEBI:18420"/>
    </ligand>
</feature>
<feature type="binding site" evidence="1">
    <location>
        <position position="112"/>
    </location>
    <ligand>
        <name>3-methyl-2-oxobutanoate</name>
        <dbReference type="ChEBI" id="CHEBI:11851"/>
    </ligand>
</feature>
<feature type="binding site" evidence="1">
    <location>
        <position position="114"/>
    </location>
    <ligand>
        <name>Mg(2+)</name>
        <dbReference type="ChEBI" id="CHEBI:18420"/>
    </ligand>
</feature>